<gene>
    <name type="ordered locus">RSc2009</name>
    <name type="ORF">RS03577</name>
</gene>
<protein>
    <recommendedName>
        <fullName evidence="1">UPF0246 protein RSc2009</fullName>
    </recommendedName>
</protein>
<evidence type="ECO:0000255" key="1">
    <source>
        <dbReference type="HAMAP-Rule" id="MF_00652"/>
    </source>
</evidence>
<name>Y2009_RALN1</name>
<dbReference type="EMBL" id="AL646052">
    <property type="protein sequence ID" value="CAD15711.1"/>
    <property type="molecule type" value="Genomic_DNA"/>
</dbReference>
<dbReference type="RefSeq" id="WP_011001944.1">
    <property type="nucleotide sequence ID" value="NC_003295.1"/>
</dbReference>
<dbReference type="SMR" id="Q8XXV4"/>
<dbReference type="STRING" id="267608.RSc2009"/>
<dbReference type="EnsemblBacteria" id="CAD15711">
    <property type="protein sequence ID" value="CAD15711"/>
    <property type="gene ID" value="RSc2009"/>
</dbReference>
<dbReference type="KEGG" id="rso:RSc2009"/>
<dbReference type="PATRIC" id="fig|267608.8.peg.2043"/>
<dbReference type="eggNOG" id="COG3022">
    <property type="taxonomic scope" value="Bacteria"/>
</dbReference>
<dbReference type="HOGENOM" id="CLU_061989_0_0_4"/>
<dbReference type="Proteomes" id="UP000001436">
    <property type="component" value="Chromosome"/>
</dbReference>
<dbReference type="GO" id="GO:0005829">
    <property type="term" value="C:cytosol"/>
    <property type="evidence" value="ECO:0007669"/>
    <property type="project" value="TreeGrafter"/>
</dbReference>
<dbReference type="GO" id="GO:0033194">
    <property type="term" value="P:response to hydroperoxide"/>
    <property type="evidence" value="ECO:0007669"/>
    <property type="project" value="TreeGrafter"/>
</dbReference>
<dbReference type="HAMAP" id="MF_00652">
    <property type="entry name" value="UPF0246"/>
    <property type="match status" value="1"/>
</dbReference>
<dbReference type="InterPro" id="IPR005583">
    <property type="entry name" value="YaaA"/>
</dbReference>
<dbReference type="NCBIfam" id="NF002541">
    <property type="entry name" value="PRK02101.1-1"/>
    <property type="match status" value="1"/>
</dbReference>
<dbReference type="NCBIfam" id="NF002542">
    <property type="entry name" value="PRK02101.1-3"/>
    <property type="match status" value="1"/>
</dbReference>
<dbReference type="PANTHER" id="PTHR30283:SF4">
    <property type="entry name" value="PEROXIDE STRESS RESISTANCE PROTEIN YAAA"/>
    <property type="match status" value="1"/>
</dbReference>
<dbReference type="PANTHER" id="PTHR30283">
    <property type="entry name" value="PEROXIDE STRESS RESPONSE PROTEIN YAAA"/>
    <property type="match status" value="1"/>
</dbReference>
<dbReference type="Pfam" id="PF03883">
    <property type="entry name" value="H2O2_YaaD"/>
    <property type="match status" value="1"/>
</dbReference>
<accession>Q8XXV4</accession>
<comment type="similarity">
    <text evidence="1">Belongs to the UPF0246 family.</text>
</comment>
<sequence length="257" mass="28974">MIIVLSPAKSLDYDTPPRIKTHTLPDFIERSAVLIETLRKLSPAQIGTLMHISDPLAVLNANRYADWSTEFTADNSKQAVLAFDGDVYGGLDANTLSADDLQFAQQHLRILSGLYGVLRPLDRMQPYRLEMGTRLANPGGKDLYAFWGDDVTLALNALLQADDDPVLVNLASEEYFKVVRPKVLKARIVTPVFEDWKGGRYKIISFYAKRARGLMARYAIEHRIADPRKLKHFDAEGYAFAAEASDDERWVFRRKAA</sequence>
<proteinExistence type="inferred from homology"/>
<reference key="1">
    <citation type="journal article" date="2002" name="Nature">
        <title>Genome sequence of the plant pathogen Ralstonia solanacearum.</title>
        <authorList>
            <person name="Salanoubat M."/>
            <person name="Genin S."/>
            <person name="Artiguenave F."/>
            <person name="Gouzy J."/>
            <person name="Mangenot S."/>
            <person name="Arlat M."/>
            <person name="Billault A."/>
            <person name="Brottier P."/>
            <person name="Camus J.-C."/>
            <person name="Cattolico L."/>
            <person name="Chandler M."/>
            <person name="Choisne N."/>
            <person name="Claudel-Renard C."/>
            <person name="Cunnac S."/>
            <person name="Demange N."/>
            <person name="Gaspin C."/>
            <person name="Lavie M."/>
            <person name="Moisan A."/>
            <person name="Robert C."/>
            <person name="Saurin W."/>
            <person name="Schiex T."/>
            <person name="Siguier P."/>
            <person name="Thebault P."/>
            <person name="Whalen M."/>
            <person name="Wincker P."/>
            <person name="Levy M."/>
            <person name="Weissenbach J."/>
            <person name="Boucher C.A."/>
        </authorList>
    </citation>
    <scope>NUCLEOTIDE SEQUENCE [LARGE SCALE GENOMIC DNA]</scope>
    <source>
        <strain>ATCC BAA-1114 / GMI1000</strain>
    </source>
</reference>
<feature type="chain" id="PRO_0000203998" description="UPF0246 protein RSc2009">
    <location>
        <begin position="1"/>
        <end position="257"/>
    </location>
</feature>
<organism>
    <name type="scientific">Ralstonia nicotianae (strain ATCC BAA-1114 / GMI1000)</name>
    <name type="common">Ralstonia solanacearum</name>
    <dbReference type="NCBI Taxonomy" id="267608"/>
    <lineage>
        <taxon>Bacteria</taxon>
        <taxon>Pseudomonadati</taxon>
        <taxon>Pseudomonadota</taxon>
        <taxon>Betaproteobacteria</taxon>
        <taxon>Burkholderiales</taxon>
        <taxon>Burkholderiaceae</taxon>
        <taxon>Ralstonia</taxon>
        <taxon>Ralstonia solanacearum species complex</taxon>
    </lineage>
</organism>
<keyword id="KW-1185">Reference proteome</keyword>